<sequence>MIKDIRTYKLCYEGINDERDALAIKGLAEHPMEIVATEIETSDGYVGYGESLAYGCSDAVQVTIEKILKPLLLKEDEELIEYLWDKMYKATLRFGRRGIAIAGISGVDTALWDIMGKKAKKPIYKLLGGSKRKVRAYITGGYYSEKKDLEKLRDEEAYYVKMGFKGIKVKIGAKSMEEDIERLKAIREVVGEDVKIAVDANNVYTFEEALEMGRRLEKLGIWFFEEPIQTDYLDLSARLAEELEVPIAGYETAYTRWEFYEIMRKRAVDIVQTDVMWTGGISEMMKIGNMAKVMGYPLIPHYSAGGISLIGNLHVAAALNSPWIEMHLRKNDLRDKIFKESIEIDNGHLVVPDRPGLGYTIRDGVFEEYKCKS</sequence>
<keyword id="KW-0119">Carbohydrate metabolism</keyword>
<keyword id="KW-0456">Lyase</keyword>
<keyword id="KW-0460">Magnesium</keyword>
<keyword id="KW-0479">Metal-binding</keyword>
<keyword id="KW-1185">Reference proteome</keyword>
<gene>
    <name evidence="3" type="primary">araD</name>
    <name evidence="5" type="ordered locus">SSO3124</name>
</gene>
<accession>Q97U96</accession>
<evidence type="ECO:0000250" key="1">
    <source>
        <dbReference type="UniProtKB" id="P11444"/>
    </source>
</evidence>
<evidence type="ECO:0000269" key="2">
    <source>
    </source>
</evidence>
<evidence type="ECO:0000303" key="3">
    <source>
    </source>
</evidence>
<evidence type="ECO:0000305" key="4"/>
<evidence type="ECO:0000312" key="5">
    <source>
        <dbReference type="EMBL" id="AAK43225.1"/>
    </source>
</evidence>
<evidence type="ECO:0000312" key="6">
    <source>
        <dbReference type="Proteomes" id="UP000001974"/>
    </source>
</evidence>
<proteinExistence type="evidence at protein level"/>
<name>ARAD_SACS2</name>
<dbReference type="EC" id="4.2.1.5" evidence="2"/>
<dbReference type="EMBL" id="AE006641">
    <property type="protein sequence ID" value="AAK43225.1"/>
    <property type="molecule type" value="Genomic_DNA"/>
</dbReference>
<dbReference type="PIR" id="B90496">
    <property type="entry name" value="B90496"/>
</dbReference>
<dbReference type="RefSeq" id="WP_009989946.1">
    <property type="nucleotide sequence ID" value="NC_002754.1"/>
</dbReference>
<dbReference type="SMR" id="Q97U96"/>
<dbReference type="FunCoup" id="Q97U96">
    <property type="interactions" value="46"/>
</dbReference>
<dbReference type="STRING" id="273057.SSO3124"/>
<dbReference type="PaxDb" id="273057-SSO3124"/>
<dbReference type="DNASU" id="1453144"/>
<dbReference type="EnsemblBacteria" id="AAK43225">
    <property type="protein sequence ID" value="AAK43225"/>
    <property type="gene ID" value="SSO3124"/>
</dbReference>
<dbReference type="GeneID" id="44128843"/>
<dbReference type="KEGG" id="sso:SSO3124"/>
<dbReference type="PATRIC" id="fig|273057.12.peg.3230"/>
<dbReference type="eggNOG" id="arCOG01168">
    <property type="taxonomic scope" value="Archaea"/>
</dbReference>
<dbReference type="HOGENOM" id="CLU_030273_3_0_2"/>
<dbReference type="InParanoid" id="Q97U96"/>
<dbReference type="PhylomeDB" id="Q97U96"/>
<dbReference type="BioCyc" id="MetaCyc:MONOMER-13205"/>
<dbReference type="BRENDA" id="4.2.1.5">
    <property type="organism ID" value="6163"/>
</dbReference>
<dbReference type="Proteomes" id="UP000001974">
    <property type="component" value="Chromosome"/>
</dbReference>
<dbReference type="GO" id="GO:0047675">
    <property type="term" value="F:arabinonate dehydratase activity"/>
    <property type="evidence" value="ECO:0000314"/>
    <property type="project" value="UniProtKB"/>
</dbReference>
<dbReference type="GO" id="GO:0016836">
    <property type="term" value="F:hydro-lyase activity"/>
    <property type="evidence" value="ECO:0000318"/>
    <property type="project" value="GO_Central"/>
</dbReference>
<dbReference type="GO" id="GO:0000287">
    <property type="term" value="F:magnesium ion binding"/>
    <property type="evidence" value="ECO:0000314"/>
    <property type="project" value="UniProtKB"/>
</dbReference>
<dbReference type="GO" id="GO:0016052">
    <property type="term" value="P:carbohydrate catabolic process"/>
    <property type="evidence" value="ECO:0000318"/>
    <property type="project" value="GO_Central"/>
</dbReference>
<dbReference type="GO" id="GO:0019571">
    <property type="term" value="P:D-arabinose catabolic process"/>
    <property type="evidence" value="ECO:0000314"/>
    <property type="project" value="UniProtKB"/>
</dbReference>
<dbReference type="GO" id="GO:0051259">
    <property type="term" value="P:protein complex oligomerization"/>
    <property type="evidence" value="ECO:0000314"/>
    <property type="project" value="UniProtKB"/>
</dbReference>
<dbReference type="CDD" id="cd03316">
    <property type="entry name" value="MR_like"/>
    <property type="match status" value="1"/>
</dbReference>
<dbReference type="Gene3D" id="3.20.20.120">
    <property type="entry name" value="Enolase-like C-terminal domain"/>
    <property type="match status" value="1"/>
</dbReference>
<dbReference type="Gene3D" id="3.30.390.10">
    <property type="entry name" value="Enolase-like, N-terminal domain"/>
    <property type="match status" value="1"/>
</dbReference>
<dbReference type="InterPro" id="IPR036849">
    <property type="entry name" value="Enolase-like_C_sf"/>
</dbReference>
<dbReference type="InterPro" id="IPR029017">
    <property type="entry name" value="Enolase-like_N"/>
</dbReference>
<dbReference type="InterPro" id="IPR029065">
    <property type="entry name" value="Enolase_C-like"/>
</dbReference>
<dbReference type="InterPro" id="IPR013342">
    <property type="entry name" value="Mandelate_racemase_C"/>
</dbReference>
<dbReference type="InterPro" id="IPR013341">
    <property type="entry name" value="Mandelate_racemase_N_dom"/>
</dbReference>
<dbReference type="InterPro" id="IPR053670">
    <property type="entry name" value="MR_MLE-like_enzyme"/>
</dbReference>
<dbReference type="InterPro" id="IPR046945">
    <property type="entry name" value="RHMD-like"/>
</dbReference>
<dbReference type="NCBIfam" id="NF040866">
    <property type="entry name" value="AraD_Arch"/>
    <property type="match status" value="1"/>
</dbReference>
<dbReference type="PANTHER" id="PTHR13794">
    <property type="entry name" value="ENOLASE SUPERFAMILY, MANDELATE RACEMASE"/>
    <property type="match status" value="1"/>
</dbReference>
<dbReference type="PANTHER" id="PTHR13794:SF58">
    <property type="entry name" value="MITOCHONDRIAL ENOLASE SUPERFAMILY MEMBER 1"/>
    <property type="match status" value="1"/>
</dbReference>
<dbReference type="Pfam" id="PF13378">
    <property type="entry name" value="MR_MLE_C"/>
    <property type="match status" value="1"/>
</dbReference>
<dbReference type="Pfam" id="PF02746">
    <property type="entry name" value="MR_MLE_N"/>
    <property type="match status" value="1"/>
</dbReference>
<dbReference type="SFLD" id="SFLDF00156">
    <property type="entry name" value="D-arabinonate_dehydratase"/>
    <property type="match status" value="1"/>
</dbReference>
<dbReference type="SFLD" id="SFLDS00001">
    <property type="entry name" value="Enolase"/>
    <property type="match status" value="1"/>
</dbReference>
<dbReference type="SMART" id="SM00922">
    <property type="entry name" value="MR_MLE"/>
    <property type="match status" value="1"/>
</dbReference>
<dbReference type="SUPFAM" id="SSF51604">
    <property type="entry name" value="Enolase C-terminal domain-like"/>
    <property type="match status" value="1"/>
</dbReference>
<dbReference type="SUPFAM" id="SSF54826">
    <property type="entry name" value="Enolase N-terminal domain-like"/>
    <property type="match status" value="1"/>
</dbReference>
<organism evidence="5">
    <name type="scientific">Saccharolobus solfataricus (strain ATCC 35092 / DSM 1617 / JCM 11322 / P2)</name>
    <name type="common">Sulfolobus solfataricus</name>
    <dbReference type="NCBI Taxonomy" id="273057"/>
    <lineage>
        <taxon>Archaea</taxon>
        <taxon>Thermoproteota</taxon>
        <taxon>Thermoprotei</taxon>
        <taxon>Sulfolobales</taxon>
        <taxon>Sulfolobaceae</taxon>
        <taxon>Saccharolobus</taxon>
    </lineage>
</organism>
<comment type="function">
    <text evidence="2">Catalyzes the dehydration of D-arabinonate to 2-keto-3-deoxy-D-arabinonate. Participates in a pentose oxidation pathway that converts D-arabinonate to 2-oxoglutarate.</text>
</comment>
<comment type="catalytic activity">
    <reaction evidence="2">
        <text>D-arabinonate = 2-dehydro-3-deoxy-D-arabinonate + H2O</text>
        <dbReference type="Rhea" id="RHEA:21836"/>
        <dbReference type="ChEBI" id="CHEBI:15377"/>
        <dbReference type="ChEBI" id="CHEBI:16157"/>
        <dbReference type="ChEBI" id="CHEBI:16699"/>
        <dbReference type="EC" id="4.2.1.5"/>
    </reaction>
</comment>
<comment type="cofactor">
    <cofactor evidence="2">
        <name>Mg(2+)</name>
        <dbReference type="ChEBI" id="CHEBI:18420"/>
    </cofactor>
</comment>
<comment type="activity regulation">
    <text evidence="2">Inhibited by substrate levels above 8 mM.</text>
</comment>
<comment type="biophysicochemical properties">
    <phDependence>
        <text evidence="2">Optimum pH is 6.7.</text>
    </phDependence>
    <temperatureDependence>
        <text evidence="2">Optimum temperature is 85 degrees Celsius.</text>
    </temperatureDependence>
</comment>
<comment type="subunit">
    <text evidence="2">Homooctamer.</text>
</comment>
<comment type="induction">
    <text evidence="2">Expression is strongly increased by growth on D-arabinose, both at the mRNA and at the protein level.</text>
</comment>
<comment type="similarity">
    <text evidence="4">Belongs to the mandelate racemase/muconate lactonizing enzyme family.</text>
</comment>
<feature type="chain" id="PRO_0000430860" description="Arabinonate dehydratase">
    <location>
        <begin position="1"/>
        <end position="373"/>
    </location>
</feature>
<feature type="binding site" evidence="1">
    <location>
        <position position="199"/>
    </location>
    <ligand>
        <name>Mg(2+)</name>
        <dbReference type="ChEBI" id="CHEBI:18420"/>
    </ligand>
</feature>
<feature type="binding site" evidence="1">
    <location>
        <position position="225"/>
    </location>
    <ligand>
        <name>Mg(2+)</name>
        <dbReference type="ChEBI" id="CHEBI:18420"/>
    </ligand>
</feature>
<feature type="binding site" evidence="1">
    <location>
        <position position="251"/>
    </location>
    <ligand>
        <name>Mg(2+)</name>
        <dbReference type="ChEBI" id="CHEBI:18420"/>
    </ligand>
</feature>
<reference evidence="6" key="1">
    <citation type="journal article" date="2001" name="Proc. Natl. Acad. Sci. U.S.A.">
        <title>The complete genome of the crenarchaeon Sulfolobus solfataricus P2.</title>
        <authorList>
            <person name="She Q."/>
            <person name="Singh R.K."/>
            <person name="Confalonieri F."/>
            <person name="Zivanovic Y."/>
            <person name="Allard G."/>
            <person name="Awayez M.J."/>
            <person name="Chan-Weiher C.C.-Y."/>
            <person name="Clausen I.G."/>
            <person name="Curtis B.A."/>
            <person name="De Moors A."/>
            <person name="Erauso G."/>
            <person name="Fletcher C."/>
            <person name="Gordon P.M.K."/>
            <person name="Heikamp-de Jong I."/>
            <person name="Jeffries A.C."/>
            <person name="Kozera C.J."/>
            <person name="Medina N."/>
            <person name="Peng X."/>
            <person name="Thi-Ngoc H.P."/>
            <person name="Redder P."/>
            <person name="Schenk M.E."/>
            <person name="Theriault C."/>
            <person name="Tolstrup N."/>
            <person name="Charlebois R.L."/>
            <person name="Doolittle W.F."/>
            <person name="Duguet M."/>
            <person name="Gaasterland T."/>
            <person name="Garrett R.A."/>
            <person name="Ragan M.A."/>
            <person name="Sensen C.W."/>
            <person name="Van der Oost J."/>
        </authorList>
    </citation>
    <scope>NUCLEOTIDE SEQUENCE [LARGE SCALE GENOMIC DNA]</scope>
    <source>
        <strain evidence="6">ATCC 35092 / DSM 1617 / JCM 11322 / P2</strain>
    </source>
</reference>
<reference key="2">
    <citation type="journal article" date="2006" name="J. Biol. Chem.">
        <title>Identification of the missing links in prokaryotic pentose oxidation pathways: evidence for enzyme recruitment.</title>
        <authorList>
            <person name="Brouns S.J."/>
            <person name="Walther J."/>
            <person name="Snijders A.P."/>
            <person name="van de Werken H.J."/>
            <person name="Willemen H.L."/>
            <person name="Worm P."/>
            <person name="de Vos M.G."/>
            <person name="Andersson A."/>
            <person name="Lundgren M."/>
            <person name="Mazon H.F."/>
            <person name="van den Heuvel R.H."/>
            <person name="Nilsson P."/>
            <person name="Salmon L."/>
            <person name="de Vos W.M."/>
            <person name="Wright P.C."/>
            <person name="Bernander R."/>
            <person name="van der Oost J."/>
        </authorList>
    </citation>
    <scope>FUNCTION</scope>
    <scope>CATALYTIC ACTIVITY</scope>
    <scope>COFACTOR</scope>
    <scope>ACTIVITY REGULATION</scope>
    <scope>INDUCTION BY D-ARABINOSE</scope>
    <scope>BIOPHYSICOCHEMICAL PROPERTIES</scope>
    <scope>SUBUNIT</scope>
</reference>
<protein>
    <recommendedName>
        <fullName>Arabinonate dehydratase</fullName>
        <ecNumber evidence="2">4.2.1.5</ecNumber>
    </recommendedName>
</protein>